<evidence type="ECO:0000255" key="1">
    <source>
        <dbReference type="HAMAP-Rule" id="MF_01317"/>
    </source>
</evidence>
<geneLocation type="chloroplast"/>
<dbReference type="EMBL" id="AY007487">
    <property type="protein sequence ID" value="AAG27032.1"/>
    <property type="molecule type" value="Genomic_DNA"/>
</dbReference>
<dbReference type="SMR" id="Q7HIT4"/>
<dbReference type="GO" id="GO:0009535">
    <property type="term" value="C:chloroplast thylakoid membrane"/>
    <property type="evidence" value="ECO:0007669"/>
    <property type="project" value="UniProtKB-SubCell"/>
</dbReference>
<dbReference type="GO" id="GO:0009539">
    <property type="term" value="C:photosystem II reaction center"/>
    <property type="evidence" value="ECO:0007669"/>
    <property type="project" value="InterPro"/>
</dbReference>
<dbReference type="GO" id="GO:0015979">
    <property type="term" value="P:photosynthesis"/>
    <property type="evidence" value="ECO:0007669"/>
    <property type="project" value="UniProtKB-UniRule"/>
</dbReference>
<dbReference type="HAMAP" id="MF_01317">
    <property type="entry name" value="PSII_PsbL"/>
    <property type="match status" value="1"/>
</dbReference>
<dbReference type="InterPro" id="IPR003372">
    <property type="entry name" value="PSII_PsbL"/>
</dbReference>
<dbReference type="InterPro" id="IPR037266">
    <property type="entry name" value="PSII_PsbL_sf"/>
</dbReference>
<dbReference type="NCBIfam" id="NF001972">
    <property type="entry name" value="PRK00753.1"/>
    <property type="match status" value="1"/>
</dbReference>
<dbReference type="Pfam" id="PF02419">
    <property type="entry name" value="PsbL"/>
    <property type="match status" value="1"/>
</dbReference>
<dbReference type="SUPFAM" id="SSF161017">
    <property type="entry name" value="Photosystem II reaction center protein L, PsbL"/>
    <property type="match status" value="1"/>
</dbReference>
<comment type="function">
    <text evidence="1">One of the components of the core complex of photosystem II (PSII). PSII is a light-driven water:plastoquinone oxidoreductase that uses light energy to abstract electrons from H(2)O, generating O(2) and a proton gradient subsequently used for ATP formation. It consists of a core antenna complex that captures photons, and an electron transfer chain that converts photonic excitation into a charge separation. This subunit is found at the monomer-monomer interface and is required for correct PSII assembly and/or dimerization.</text>
</comment>
<comment type="subunit">
    <text evidence="1">PSII is composed of 1 copy each of membrane proteins PsbA, PsbB, PsbC, PsbD, PsbE, PsbF, PsbH, PsbI, PsbJ, PsbK, PsbL, PsbM, PsbT, PsbX, PsbY, PsbZ, Psb30/Ycf12, at least 3 peripheral proteins of the oxygen-evolving complex and a large number of cofactors. It forms dimeric complexes.</text>
</comment>
<comment type="subcellular location">
    <subcellularLocation>
        <location evidence="1">Plastid</location>
        <location evidence="1">Chloroplast thylakoid membrane</location>
        <topology evidence="1">Single-pass membrane protein</topology>
    </subcellularLocation>
</comment>
<comment type="similarity">
    <text evidence="1">Belongs to the PsbL family.</text>
</comment>
<organism>
    <name type="scientific">Spathiphyllum wallisii</name>
    <name type="common">Peace lily</name>
    <dbReference type="NCBI Taxonomy" id="85269"/>
    <lineage>
        <taxon>Eukaryota</taxon>
        <taxon>Viridiplantae</taxon>
        <taxon>Streptophyta</taxon>
        <taxon>Embryophyta</taxon>
        <taxon>Tracheophyta</taxon>
        <taxon>Spermatophyta</taxon>
        <taxon>Magnoliopsida</taxon>
        <taxon>Liliopsida</taxon>
        <taxon>Araceae</taxon>
        <taxon>Pothoideae</taxon>
        <taxon>Monstereae</taxon>
        <taxon>Spathiphyllum</taxon>
    </lineage>
</organism>
<accession>Q7HIT4</accession>
<name>PSBL_SPAWA</name>
<feature type="chain" id="PRO_0000219772" description="Photosystem II reaction center protein L">
    <location>
        <begin position="1"/>
        <end position="38"/>
    </location>
</feature>
<feature type="transmembrane region" description="Helical" evidence="1">
    <location>
        <begin position="17"/>
        <end position="37"/>
    </location>
</feature>
<keyword id="KW-0150">Chloroplast</keyword>
<keyword id="KW-0472">Membrane</keyword>
<keyword id="KW-0602">Photosynthesis</keyword>
<keyword id="KW-0604">Photosystem II</keyword>
<keyword id="KW-0934">Plastid</keyword>
<keyword id="KW-0674">Reaction center</keyword>
<keyword id="KW-0793">Thylakoid</keyword>
<keyword id="KW-0812">Transmembrane</keyword>
<keyword id="KW-1133">Transmembrane helix</keyword>
<proteinExistence type="inferred from homology"/>
<sequence>MTQSNPNEQNVELNRTSLYWGLLLIFVLAVLFSNYFFN</sequence>
<protein>
    <recommendedName>
        <fullName evidence="1">Photosystem II reaction center protein L</fullName>
        <shortName evidence="1">PSII-L</shortName>
    </recommendedName>
</protein>
<gene>
    <name evidence="1" type="primary">psbL</name>
</gene>
<reference key="1">
    <citation type="submission" date="2000-02" db="EMBL/GenBank/DDBJ databases">
        <title>Long branches in the seed plants and the root of the angiosperms.</title>
        <authorList>
            <person name="Graham S.W."/>
            <person name="Reeves P.A."/>
            <person name="Burns A."/>
            <person name="Olmstead R.G."/>
        </authorList>
    </citation>
    <scope>NUCLEOTIDE SEQUENCE [GENOMIC DNA]</scope>
</reference>